<evidence type="ECO:0000255" key="1">
    <source>
        <dbReference type="HAMAP-Rule" id="MF_00921"/>
    </source>
</evidence>
<accession>B9KHZ9</accession>
<sequence>MRNKAVLDLHLVSDSTCETVIAVARSAVEHFKSLEVNEFVWSLVGSKRQVDKVMLNINPERHNLIMYTVVDDDLRKYLKEKATAQSVRCIPVLAHVIREISCYLQVTKDPNAHPHKLGDEYFNRIDAINYTISHDDGQNLWDIDQADIIIVGVSRTSKSPTSIYLAYRGYRVVNIPLVCSVQLPVDPATIADKLVVGLTIDADRLIQIRRNRLISMKHQENCNYVSYEQVVEEINEMKKICAKNRWPTIDVTQKSVEEIAATIIQFFNRKNNRTGDALY</sequence>
<keyword id="KW-0418">Kinase</keyword>
<keyword id="KW-0547">Nucleotide-binding</keyword>
<keyword id="KW-1185">Reference proteome</keyword>
<keyword id="KW-0723">Serine/threonine-protein kinase</keyword>
<keyword id="KW-0808">Transferase</keyword>
<reference key="1">
    <citation type="journal article" date="2009" name="BMC Genomics">
        <title>Conservation in the face of diversity: multistrain analysis of an intracellular bacterium.</title>
        <authorList>
            <person name="Dark M.J."/>
            <person name="Herndon D.R."/>
            <person name="Kappmeyer L.S."/>
            <person name="Gonzales M.P."/>
            <person name="Nordeen E."/>
            <person name="Palmer G.H."/>
            <person name="Knowles D.P. Jr."/>
            <person name="Brayton K.A."/>
        </authorList>
    </citation>
    <scope>NUCLEOTIDE SEQUENCE [LARGE SCALE GENOMIC DNA]</scope>
    <source>
        <strain>Florida</strain>
    </source>
</reference>
<organism>
    <name type="scientific">Anaplasma marginale (strain Florida)</name>
    <dbReference type="NCBI Taxonomy" id="320483"/>
    <lineage>
        <taxon>Bacteria</taxon>
        <taxon>Pseudomonadati</taxon>
        <taxon>Pseudomonadota</taxon>
        <taxon>Alphaproteobacteria</taxon>
        <taxon>Rickettsiales</taxon>
        <taxon>Anaplasmataceae</taxon>
        <taxon>Anaplasma</taxon>
    </lineage>
</organism>
<protein>
    <recommendedName>
        <fullName evidence="1">Putative pyruvate, phosphate dikinase regulatory protein</fullName>
        <shortName evidence="1">PPDK regulatory protein</shortName>
        <ecNumber evidence="1">2.7.11.32</ecNumber>
        <ecNumber evidence="1">2.7.4.27</ecNumber>
    </recommendedName>
</protein>
<comment type="function">
    <text evidence="1">Bifunctional serine/threonine kinase and phosphorylase involved in the regulation of the pyruvate, phosphate dikinase (PPDK) by catalyzing its phosphorylation/dephosphorylation.</text>
</comment>
<comment type="catalytic activity">
    <reaction evidence="1">
        <text>N(tele)-phospho-L-histidyl/L-threonyl-[pyruvate, phosphate dikinase] + ADP = N(tele)-phospho-L-histidyl/O-phospho-L-threonyl-[pyruvate, phosphate dikinase] + AMP + H(+)</text>
        <dbReference type="Rhea" id="RHEA:43692"/>
        <dbReference type="Rhea" id="RHEA-COMP:10650"/>
        <dbReference type="Rhea" id="RHEA-COMP:10651"/>
        <dbReference type="ChEBI" id="CHEBI:15378"/>
        <dbReference type="ChEBI" id="CHEBI:30013"/>
        <dbReference type="ChEBI" id="CHEBI:61977"/>
        <dbReference type="ChEBI" id="CHEBI:83586"/>
        <dbReference type="ChEBI" id="CHEBI:456215"/>
        <dbReference type="ChEBI" id="CHEBI:456216"/>
        <dbReference type="EC" id="2.7.11.32"/>
    </reaction>
</comment>
<comment type="catalytic activity">
    <reaction evidence="1">
        <text>N(tele)-phospho-L-histidyl/O-phospho-L-threonyl-[pyruvate, phosphate dikinase] + phosphate + H(+) = N(tele)-phospho-L-histidyl/L-threonyl-[pyruvate, phosphate dikinase] + diphosphate</text>
        <dbReference type="Rhea" id="RHEA:43696"/>
        <dbReference type="Rhea" id="RHEA-COMP:10650"/>
        <dbReference type="Rhea" id="RHEA-COMP:10651"/>
        <dbReference type="ChEBI" id="CHEBI:15378"/>
        <dbReference type="ChEBI" id="CHEBI:30013"/>
        <dbReference type="ChEBI" id="CHEBI:33019"/>
        <dbReference type="ChEBI" id="CHEBI:43474"/>
        <dbReference type="ChEBI" id="CHEBI:61977"/>
        <dbReference type="ChEBI" id="CHEBI:83586"/>
        <dbReference type="EC" id="2.7.4.27"/>
    </reaction>
</comment>
<comment type="similarity">
    <text evidence="1">Belongs to the pyruvate, phosphate/water dikinase regulatory protein family. PDRP subfamily.</text>
</comment>
<dbReference type="EC" id="2.7.11.32" evidence="1"/>
<dbReference type="EC" id="2.7.4.27" evidence="1"/>
<dbReference type="EMBL" id="CP001079">
    <property type="protein sequence ID" value="ACM49111.1"/>
    <property type="molecule type" value="Genomic_DNA"/>
</dbReference>
<dbReference type="RefSeq" id="WP_010267235.1">
    <property type="nucleotide sequence ID" value="NZ_AFMS01000048.1"/>
</dbReference>
<dbReference type="SMR" id="B9KHZ9"/>
<dbReference type="STRING" id="320483.AMF_235"/>
<dbReference type="GeneID" id="7398349"/>
<dbReference type="KEGG" id="amf:AMF_235"/>
<dbReference type="PATRIC" id="fig|320483.3.peg.268"/>
<dbReference type="eggNOG" id="COG1806">
    <property type="taxonomic scope" value="Bacteria"/>
</dbReference>
<dbReference type="HOGENOM" id="CLU_046206_2_0_5"/>
<dbReference type="Proteomes" id="UP000007307">
    <property type="component" value="Chromosome"/>
</dbReference>
<dbReference type="GO" id="GO:0043531">
    <property type="term" value="F:ADP binding"/>
    <property type="evidence" value="ECO:0007669"/>
    <property type="project" value="UniProtKB-UniRule"/>
</dbReference>
<dbReference type="GO" id="GO:0005524">
    <property type="term" value="F:ATP binding"/>
    <property type="evidence" value="ECO:0007669"/>
    <property type="project" value="InterPro"/>
</dbReference>
<dbReference type="GO" id="GO:0016776">
    <property type="term" value="F:phosphotransferase activity, phosphate group as acceptor"/>
    <property type="evidence" value="ECO:0007669"/>
    <property type="project" value="UniProtKB-UniRule"/>
</dbReference>
<dbReference type="GO" id="GO:0004674">
    <property type="term" value="F:protein serine/threonine kinase activity"/>
    <property type="evidence" value="ECO:0007669"/>
    <property type="project" value="UniProtKB-UniRule"/>
</dbReference>
<dbReference type="HAMAP" id="MF_00921">
    <property type="entry name" value="PDRP"/>
    <property type="match status" value="1"/>
</dbReference>
<dbReference type="InterPro" id="IPR005177">
    <property type="entry name" value="Kinase-pyrophosphorylase"/>
</dbReference>
<dbReference type="InterPro" id="IPR026565">
    <property type="entry name" value="PPDK_reg"/>
</dbReference>
<dbReference type="NCBIfam" id="NF003742">
    <property type="entry name" value="PRK05339.1"/>
    <property type="match status" value="1"/>
</dbReference>
<dbReference type="PANTHER" id="PTHR31756">
    <property type="entry name" value="PYRUVATE, PHOSPHATE DIKINASE REGULATORY PROTEIN 1, CHLOROPLASTIC"/>
    <property type="match status" value="1"/>
</dbReference>
<dbReference type="PANTHER" id="PTHR31756:SF3">
    <property type="entry name" value="PYRUVATE, PHOSPHATE DIKINASE REGULATORY PROTEIN 1, CHLOROPLASTIC"/>
    <property type="match status" value="1"/>
</dbReference>
<dbReference type="Pfam" id="PF03618">
    <property type="entry name" value="Kinase-PPPase"/>
    <property type="match status" value="1"/>
</dbReference>
<name>PDRP_ANAMF</name>
<proteinExistence type="inferred from homology"/>
<feature type="chain" id="PRO_1000149697" description="Putative pyruvate, phosphate dikinase regulatory protein">
    <location>
        <begin position="1"/>
        <end position="279"/>
    </location>
</feature>
<feature type="binding site" evidence="1">
    <location>
        <begin position="152"/>
        <end position="159"/>
    </location>
    <ligand>
        <name>ADP</name>
        <dbReference type="ChEBI" id="CHEBI:456216"/>
    </ligand>
</feature>
<gene>
    <name type="ordered locus">AMF_235</name>
</gene>